<feature type="chain" id="PRO_0000284673" description="Arf-GAP with GTPase, ANK repeat and PH domain-containing protein 4">
    <location>
        <begin position="1"/>
        <end position="663"/>
    </location>
</feature>
<feature type="domain" description="PH" evidence="1">
    <location>
        <begin position="259"/>
        <end position="420"/>
    </location>
</feature>
<feature type="domain" description="Arf-GAP" evidence="2">
    <location>
        <begin position="441"/>
        <end position="561"/>
    </location>
</feature>
<feature type="repeat" description="ANK 1">
    <location>
        <begin position="600"/>
        <end position="629"/>
    </location>
</feature>
<feature type="repeat" description="ANK 2">
    <location>
        <begin position="633"/>
        <end position="662"/>
    </location>
</feature>
<feature type="zinc finger region" description="C4-type" evidence="2">
    <location>
        <begin position="456"/>
        <end position="479"/>
    </location>
</feature>
<feature type="region of interest" description="Disordered" evidence="3">
    <location>
        <begin position="185"/>
        <end position="216"/>
    </location>
</feature>
<feature type="region of interest" description="Disordered" evidence="3">
    <location>
        <begin position="231"/>
        <end position="255"/>
    </location>
</feature>
<feature type="region of interest" description="Disordered" evidence="3">
    <location>
        <begin position="359"/>
        <end position="381"/>
    </location>
</feature>
<feature type="region of interest" description="Disordered" evidence="3">
    <location>
        <begin position="519"/>
        <end position="540"/>
    </location>
</feature>
<feature type="compositionally biased region" description="Low complexity" evidence="3">
    <location>
        <begin position="188"/>
        <end position="202"/>
    </location>
</feature>
<feature type="compositionally biased region" description="Polar residues" evidence="3">
    <location>
        <begin position="203"/>
        <end position="216"/>
    </location>
</feature>
<feature type="compositionally biased region" description="Basic and acidic residues" evidence="3">
    <location>
        <begin position="235"/>
        <end position="250"/>
    </location>
</feature>
<feature type="compositionally biased region" description="Polar residues" evidence="3">
    <location>
        <begin position="519"/>
        <end position="530"/>
    </location>
</feature>
<feature type="compositionally biased region" description="Basic and acidic residues" evidence="3">
    <location>
        <begin position="531"/>
        <end position="540"/>
    </location>
</feature>
<feature type="sequence variant" id="VAR_031804" description="In dbSNP:rs1169771928." evidence="4">
    <original>K</original>
    <variation>E</variation>
    <location>
        <position position="661"/>
    </location>
</feature>
<feature type="sequence conflict" description="In Ref. 1; AAL10290." evidence="5" ref="1">
    <original>T</original>
    <variation>S</variation>
    <location>
        <position position="334"/>
    </location>
</feature>
<organism>
    <name type="scientific">Homo sapiens</name>
    <name type="common">Human</name>
    <dbReference type="NCBI Taxonomy" id="9606"/>
    <lineage>
        <taxon>Eukaryota</taxon>
        <taxon>Metazoa</taxon>
        <taxon>Chordata</taxon>
        <taxon>Craniata</taxon>
        <taxon>Vertebrata</taxon>
        <taxon>Euteleostomi</taxon>
        <taxon>Mammalia</taxon>
        <taxon>Eutheria</taxon>
        <taxon>Euarchontoglires</taxon>
        <taxon>Primates</taxon>
        <taxon>Haplorrhini</taxon>
        <taxon>Catarrhini</taxon>
        <taxon>Hominidae</taxon>
        <taxon>Homo</taxon>
    </lineage>
</organism>
<sequence length="663" mass="73070">MGNILTCRVHPSVSLEFDQQQGSVCPSESEIYEAGAGDRMAGAPMAAAVQPAEVTVEVGEDLHMHHVRDREMPEALEFNPSANPEASTIFQRNSQTDVVEIRRSNCTNHVSTVRFSQQYSLCSTIFLDDSTAIQHYLTMTIISVTLEIPHHITQRDADRSLSIPDEQLHSFAVSTVHIMKKRNGGGSLNNYSSSIPSTPSTSQEDPQFSVPPTANTPTPVCKRSMRWSNLFTSEKGSDPDKERKAPENHADTIGSGRAIPIKQGMLLKRSGKWLKTWKKKYVTLCSNGVLTYYSSLGDYMKNIHKKEIDLQTSTIKVPGKWPSLATSACTPISTSKSNGLSKDMDTGLGDSICFSPSISSTTSPKLNPPPSPHANKKKHLKKKSTNNFMIVSATGQTWHFEATTYEERDAWVQAIQSQILASLQSCESSKSKSQLTSQSKAMALQSIQNMRGNAHCVDCETQNPKWASLNLGVLMCIECSGIHRSLGTRLSRVRSLELDDWPVELRKVMSSIGNDLANSIWEGSSQGQTKPSEKSTREEKERWIRSKYEEKLFLAPLPCTELSLGQQLLRATADEDLQTAILLLAHGSREEVNETCGEGDGCTALHLACRKGNVVLAQLLIWYGVDVMARDAHGNTALTYARQASSQECINVLLQYGCPDKCV</sequence>
<name>AGAP4_HUMAN</name>
<evidence type="ECO:0000255" key="1">
    <source>
        <dbReference type="PROSITE-ProRule" id="PRU00145"/>
    </source>
</evidence>
<evidence type="ECO:0000255" key="2">
    <source>
        <dbReference type="PROSITE-ProRule" id="PRU00288"/>
    </source>
</evidence>
<evidence type="ECO:0000256" key="3">
    <source>
        <dbReference type="SAM" id="MobiDB-lite"/>
    </source>
</evidence>
<evidence type="ECO:0000269" key="4">
    <source ref="1"/>
</evidence>
<evidence type="ECO:0000305" key="5"/>
<evidence type="ECO:0000312" key="6">
    <source>
        <dbReference type="EMBL" id="AAL10290.1"/>
    </source>
</evidence>
<evidence type="ECO:0000312" key="7">
    <source>
        <dbReference type="HGNC" id="HGNC:23459"/>
    </source>
</evidence>
<proteinExistence type="evidence at transcript level"/>
<reference key="1">
    <citation type="submission" date="2001-08" db="EMBL/GenBank/DDBJ databases">
        <title>Molecular cloning of MRIP2, a novel gene located on human chromosome 10.</title>
        <authorList>
            <person name="Gong L."/>
            <person name="Wu K."/>
        </authorList>
    </citation>
    <scope>NUCLEOTIDE SEQUENCE [MRNA]</scope>
    <scope>VARIANT GLU-661</scope>
</reference>
<reference key="2">
    <citation type="journal article" date="2004" name="Nature">
        <title>The DNA sequence and comparative analysis of human chromosome 10.</title>
        <authorList>
            <person name="Deloukas P."/>
            <person name="Earthrowl M.E."/>
            <person name="Grafham D.V."/>
            <person name="Rubenfield M."/>
            <person name="French L."/>
            <person name="Steward C.A."/>
            <person name="Sims S.K."/>
            <person name="Jones M.C."/>
            <person name="Searle S."/>
            <person name="Scott C."/>
            <person name="Howe K."/>
            <person name="Hunt S.E."/>
            <person name="Andrews T.D."/>
            <person name="Gilbert J.G.R."/>
            <person name="Swarbreck D."/>
            <person name="Ashurst J.L."/>
            <person name="Taylor A."/>
            <person name="Battles J."/>
            <person name="Bird C.P."/>
            <person name="Ainscough R."/>
            <person name="Almeida J.P."/>
            <person name="Ashwell R.I.S."/>
            <person name="Ambrose K.D."/>
            <person name="Babbage A.K."/>
            <person name="Bagguley C.L."/>
            <person name="Bailey J."/>
            <person name="Banerjee R."/>
            <person name="Bates K."/>
            <person name="Beasley H."/>
            <person name="Bray-Allen S."/>
            <person name="Brown A.J."/>
            <person name="Brown J.Y."/>
            <person name="Burford D.C."/>
            <person name="Burrill W."/>
            <person name="Burton J."/>
            <person name="Cahill P."/>
            <person name="Camire D."/>
            <person name="Carter N.P."/>
            <person name="Chapman J.C."/>
            <person name="Clark S.Y."/>
            <person name="Clarke G."/>
            <person name="Clee C.M."/>
            <person name="Clegg S."/>
            <person name="Corby N."/>
            <person name="Coulson A."/>
            <person name="Dhami P."/>
            <person name="Dutta I."/>
            <person name="Dunn M."/>
            <person name="Faulkner L."/>
            <person name="Frankish A."/>
            <person name="Frankland J.A."/>
            <person name="Garner P."/>
            <person name="Garnett J."/>
            <person name="Gribble S."/>
            <person name="Griffiths C."/>
            <person name="Grocock R."/>
            <person name="Gustafson E."/>
            <person name="Hammond S."/>
            <person name="Harley J.L."/>
            <person name="Hart E."/>
            <person name="Heath P.D."/>
            <person name="Ho T.P."/>
            <person name="Hopkins B."/>
            <person name="Horne J."/>
            <person name="Howden P.J."/>
            <person name="Huckle E."/>
            <person name="Hynds C."/>
            <person name="Johnson C."/>
            <person name="Johnson D."/>
            <person name="Kana A."/>
            <person name="Kay M."/>
            <person name="Kimberley A.M."/>
            <person name="Kershaw J.K."/>
            <person name="Kokkinaki M."/>
            <person name="Laird G.K."/>
            <person name="Lawlor S."/>
            <person name="Lee H.M."/>
            <person name="Leongamornlert D.A."/>
            <person name="Laird G."/>
            <person name="Lloyd C."/>
            <person name="Lloyd D.M."/>
            <person name="Loveland J."/>
            <person name="Lovell J."/>
            <person name="McLaren S."/>
            <person name="McLay K.E."/>
            <person name="McMurray A."/>
            <person name="Mashreghi-Mohammadi M."/>
            <person name="Matthews L."/>
            <person name="Milne S."/>
            <person name="Nickerson T."/>
            <person name="Nguyen M."/>
            <person name="Overton-Larty E."/>
            <person name="Palmer S.A."/>
            <person name="Pearce A.V."/>
            <person name="Peck A.I."/>
            <person name="Pelan S."/>
            <person name="Phillimore B."/>
            <person name="Porter K."/>
            <person name="Rice C.M."/>
            <person name="Rogosin A."/>
            <person name="Ross M.T."/>
            <person name="Sarafidou T."/>
            <person name="Sehra H.K."/>
            <person name="Shownkeen R."/>
            <person name="Skuce C.D."/>
            <person name="Smith M."/>
            <person name="Standring L."/>
            <person name="Sycamore N."/>
            <person name="Tester J."/>
            <person name="Thorpe A."/>
            <person name="Torcasso W."/>
            <person name="Tracey A."/>
            <person name="Tromans A."/>
            <person name="Tsolas J."/>
            <person name="Wall M."/>
            <person name="Walsh J."/>
            <person name="Wang H."/>
            <person name="Weinstock K."/>
            <person name="West A.P."/>
            <person name="Willey D.L."/>
            <person name="Whitehead S.L."/>
            <person name="Wilming L."/>
            <person name="Wray P.W."/>
            <person name="Young L."/>
            <person name="Chen Y."/>
            <person name="Lovering R.C."/>
            <person name="Moschonas N.K."/>
            <person name="Siebert R."/>
            <person name="Fechtel K."/>
            <person name="Bentley D."/>
            <person name="Durbin R.M."/>
            <person name="Hubbard T."/>
            <person name="Doucette-Stamm L."/>
            <person name="Beck S."/>
            <person name="Smith D.R."/>
            <person name="Rogers J."/>
        </authorList>
    </citation>
    <scope>NUCLEOTIDE SEQUENCE [LARGE SCALE GENOMIC DNA]</scope>
</reference>
<accession>Q96P64</accession>
<comment type="function">
    <text evidence="5">Putative GTPase-activating protein.</text>
</comment>
<comment type="miscellaneous">
    <text>Encoded by one of the numerous copies of centaurin gamma-like genes clustered in the q11 region of chromosome 10.</text>
</comment>
<comment type="similarity">
    <text evidence="5">Belongs to the centaurin gamma-like family.</text>
</comment>
<protein>
    <recommendedName>
        <fullName evidence="7">Arf-GAP with GTPase, ANK repeat and PH domain-containing protein 4</fullName>
        <shortName>AGAP-4</shortName>
    </recommendedName>
    <alternativeName>
        <fullName evidence="7">Centaurin-gamma-like family member 1</fullName>
    </alternativeName>
    <alternativeName>
        <fullName evidence="7">Centaurin-gamma-like family member 5</fullName>
    </alternativeName>
</protein>
<gene>
    <name evidence="7" type="primary">AGAP4</name>
    <name evidence="7" type="synonym">AGAP8</name>
    <name evidence="7" type="synonym">CTGLF1</name>
    <name evidence="7" type="synonym">CTGLF5</name>
    <name evidence="6" type="synonym">MRIP2</name>
</gene>
<keyword id="KW-0040">ANK repeat</keyword>
<keyword id="KW-0343">GTPase activation</keyword>
<keyword id="KW-0479">Metal-binding</keyword>
<keyword id="KW-1185">Reference proteome</keyword>
<keyword id="KW-0677">Repeat</keyword>
<keyword id="KW-0862">Zinc</keyword>
<keyword id="KW-0863">Zinc-finger</keyword>
<dbReference type="EMBL" id="AF411132">
    <property type="protein sequence ID" value="AAL10290.1"/>
    <property type="molecule type" value="mRNA"/>
</dbReference>
<dbReference type="EMBL" id="AC012044">
    <property type="status" value="NOT_ANNOTATED_CDS"/>
    <property type="molecule type" value="Genomic_DNA"/>
</dbReference>
<dbReference type="CCDS" id="CCDS7215.1"/>
<dbReference type="RefSeq" id="NP_001263272.2">
    <property type="nucleotide sequence ID" value="NM_001276343.2"/>
</dbReference>
<dbReference type="RefSeq" id="NP_597703.2">
    <property type="nucleotide sequence ID" value="NM_133446.4"/>
</dbReference>
<dbReference type="SMR" id="Q96P64"/>
<dbReference type="BioGRID" id="125632">
    <property type="interactions" value="6"/>
</dbReference>
<dbReference type="FunCoup" id="Q96P64">
    <property type="interactions" value="253"/>
</dbReference>
<dbReference type="IntAct" id="Q96P64">
    <property type="interactions" value="2"/>
</dbReference>
<dbReference type="MINT" id="Q96P64"/>
<dbReference type="STRING" id="9606.ENSP00000392513"/>
<dbReference type="GlyGen" id="Q96P64">
    <property type="glycosylation" value="1 site"/>
</dbReference>
<dbReference type="iPTMnet" id="Q96P64"/>
<dbReference type="PhosphoSitePlus" id="Q96P64"/>
<dbReference type="BioMuta" id="AGAP4"/>
<dbReference type="DMDM" id="296434392"/>
<dbReference type="jPOST" id="Q96P64"/>
<dbReference type="MassIVE" id="Q96P64"/>
<dbReference type="PaxDb" id="9606-ENSP00000392513"/>
<dbReference type="PeptideAtlas" id="Q96P64"/>
<dbReference type="ProteomicsDB" id="77638"/>
<dbReference type="Antibodypedia" id="58589">
    <property type="antibodies" value="80 antibodies from 16 providers"/>
</dbReference>
<dbReference type="DNASU" id="119016"/>
<dbReference type="Ensembl" id="ENST00000448048.7">
    <property type="protein sequence ID" value="ENSP00000392513.2"/>
    <property type="gene ID" value="ENSG00000188234.15"/>
</dbReference>
<dbReference type="GeneID" id="119016"/>
<dbReference type="KEGG" id="hsa:119016"/>
<dbReference type="UCSC" id="uc057szm.1">
    <property type="organism name" value="human"/>
</dbReference>
<dbReference type="AGR" id="HGNC:23459"/>
<dbReference type="CTD" id="119016"/>
<dbReference type="GeneCards" id="AGAP4"/>
<dbReference type="HGNC" id="HGNC:23459">
    <property type="gene designation" value="AGAP4"/>
</dbReference>
<dbReference type="HPA" id="ENSG00000188234">
    <property type="expression patterns" value="Low tissue specificity"/>
</dbReference>
<dbReference type="neXtProt" id="NX_Q96P64"/>
<dbReference type="OpenTargets" id="ENSG00000188234"/>
<dbReference type="PharmGKB" id="PA164715122"/>
<dbReference type="VEuPathDB" id="HostDB:ENSG00000188234"/>
<dbReference type="eggNOG" id="KOG0705">
    <property type="taxonomic scope" value="Eukaryota"/>
</dbReference>
<dbReference type="GeneTree" id="ENSGT00940000163475"/>
<dbReference type="HOGENOM" id="CLU_007326_4_0_1"/>
<dbReference type="InParanoid" id="Q96P64"/>
<dbReference type="OMA" id="SKFWLMS"/>
<dbReference type="OrthoDB" id="6136903at2759"/>
<dbReference type="PAN-GO" id="Q96P64">
    <property type="GO annotations" value="3 GO annotations based on evolutionary models"/>
</dbReference>
<dbReference type="PhylomeDB" id="Q96P64"/>
<dbReference type="TreeFam" id="TF317762"/>
<dbReference type="PathwayCommons" id="Q96P64"/>
<dbReference type="SignaLink" id="Q96P64"/>
<dbReference type="BioGRID-ORCS" id="119016">
    <property type="hits" value="42 hits in 689 CRISPR screens"/>
</dbReference>
<dbReference type="ChiTaRS" id="AGAP4">
    <property type="organism name" value="human"/>
</dbReference>
<dbReference type="GenomeRNAi" id="119016"/>
<dbReference type="Pharos" id="Q96P64">
    <property type="development level" value="Tdark"/>
</dbReference>
<dbReference type="PRO" id="PR:Q96P64"/>
<dbReference type="Proteomes" id="UP000005640">
    <property type="component" value="Chromosome 10"/>
</dbReference>
<dbReference type="RNAct" id="Q96P64">
    <property type="molecule type" value="protein"/>
</dbReference>
<dbReference type="Bgee" id="ENSG00000188234">
    <property type="expression patterns" value="Expressed in cerebellar hemisphere and 99 other cell types or tissues"/>
</dbReference>
<dbReference type="ExpressionAtlas" id="Q96P64">
    <property type="expression patterns" value="baseline and differential"/>
</dbReference>
<dbReference type="GO" id="GO:0005096">
    <property type="term" value="F:GTPase activator activity"/>
    <property type="evidence" value="ECO:0000318"/>
    <property type="project" value="GO_Central"/>
</dbReference>
<dbReference type="GO" id="GO:0003924">
    <property type="term" value="F:GTPase activity"/>
    <property type="evidence" value="ECO:0000318"/>
    <property type="project" value="GO_Central"/>
</dbReference>
<dbReference type="GO" id="GO:0008270">
    <property type="term" value="F:zinc ion binding"/>
    <property type="evidence" value="ECO:0007669"/>
    <property type="project" value="UniProtKB-KW"/>
</dbReference>
<dbReference type="CDD" id="cd08853">
    <property type="entry name" value="ArfGap_AGAP2"/>
    <property type="match status" value="1"/>
</dbReference>
<dbReference type="CDD" id="cd01250">
    <property type="entry name" value="PH_AGAP"/>
    <property type="match status" value="1"/>
</dbReference>
<dbReference type="FunFam" id="1.10.220.150:FF:000001">
    <property type="entry name" value="Arf-GAP with GTPase, ANK repeat and PH domain-containing protein 1"/>
    <property type="match status" value="1"/>
</dbReference>
<dbReference type="FunFam" id="1.25.40.20:FF:000027">
    <property type="entry name" value="Arf-GAP with GTPase, ANK repeat and PH domain-containing protein 1"/>
    <property type="match status" value="1"/>
</dbReference>
<dbReference type="Gene3D" id="1.25.40.20">
    <property type="entry name" value="Ankyrin repeat-containing domain"/>
    <property type="match status" value="1"/>
</dbReference>
<dbReference type="Gene3D" id="1.10.220.150">
    <property type="entry name" value="Arf GTPase activating protein"/>
    <property type="match status" value="1"/>
</dbReference>
<dbReference type="Gene3D" id="2.30.29.30">
    <property type="entry name" value="Pleckstrin-homology domain (PH domain)/Phosphotyrosine-binding domain (PTB)"/>
    <property type="match status" value="1"/>
</dbReference>
<dbReference type="InterPro" id="IPR002110">
    <property type="entry name" value="Ankyrin_rpt"/>
</dbReference>
<dbReference type="InterPro" id="IPR036770">
    <property type="entry name" value="Ankyrin_rpt-contain_sf"/>
</dbReference>
<dbReference type="InterPro" id="IPR051282">
    <property type="entry name" value="Arf-GAP_GTPase_ANK_PH"/>
</dbReference>
<dbReference type="InterPro" id="IPR037278">
    <property type="entry name" value="ARFGAP/RecO"/>
</dbReference>
<dbReference type="InterPro" id="IPR001164">
    <property type="entry name" value="ArfGAP_dom"/>
</dbReference>
<dbReference type="InterPro" id="IPR038508">
    <property type="entry name" value="ArfGAP_dom_sf"/>
</dbReference>
<dbReference type="InterPro" id="IPR011993">
    <property type="entry name" value="PH-like_dom_sf"/>
</dbReference>
<dbReference type="InterPro" id="IPR001849">
    <property type="entry name" value="PH_domain"/>
</dbReference>
<dbReference type="PANTHER" id="PTHR45819:SF7">
    <property type="entry name" value="ARF-GAP WITH GTPASE, ANK REPEAT AND PH DOMAIN-CONTAINING PROTEIN 4-RELATED"/>
    <property type="match status" value="1"/>
</dbReference>
<dbReference type="PANTHER" id="PTHR45819">
    <property type="entry name" value="CENTAURIN-GAMMA-1A"/>
    <property type="match status" value="1"/>
</dbReference>
<dbReference type="Pfam" id="PF12796">
    <property type="entry name" value="Ank_2"/>
    <property type="match status" value="1"/>
</dbReference>
<dbReference type="Pfam" id="PF01412">
    <property type="entry name" value="ArfGap"/>
    <property type="match status" value="1"/>
</dbReference>
<dbReference type="PRINTS" id="PR00405">
    <property type="entry name" value="REVINTRACTNG"/>
</dbReference>
<dbReference type="SMART" id="SM00248">
    <property type="entry name" value="ANK"/>
    <property type="match status" value="2"/>
</dbReference>
<dbReference type="SMART" id="SM00105">
    <property type="entry name" value="ArfGap"/>
    <property type="match status" value="1"/>
</dbReference>
<dbReference type="SMART" id="SM00233">
    <property type="entry name" value="PH"/>
    <property type="match status" value="1"/>
</dbReference>
<dbReference type="SUPFAM" id="SSF48403">
    <property type="entry name" value="Ankyrin repeat"/>
    <property type="match status" value="1"/>
</dbReference>
<dbReference type="SUPFAM" id="SSF57863">
    <property type="entry name" value="ArfGap/RecO-like zinc finger"/>
    <property type="match status" value="1"/>
</dbReference>
<dbReference type="SUPFAM" id="SSF50729">
    <property type="entry name" value="PH domain-like"/>
    <property type="match status" value="1"/>
</dbReference>
<dbReference type="PROSITE" id="PS50297">
    <property type="entry name" value="ANK_REP_REGION"/>
    <property type="match status" value="1"/>
</dbReference>
<dbReference type="PROSITE" id="PS50088">
    <property type="entry name" value="ANK_REPEAT"/>
    <property type="match status" value="1"/>
</dbReference>
<dbReference type="PROSITE" id="PS50115">
    <property type="entry name" value="ARFGAP"/>
    <property type="match status" value="1"/>
</dbReference>
<dbReference type="PROSITE" id="PS50003">
    <property type="entry name" value="PH_DOMAIN"/>
    <property type="match status" value="1"/>
</dbReference>